<reference key="1">
    <citation type="journal article" date="2006" name="Proc. Natl. Acad. Sci. U.S.A.">
        <title>Comparative genomics of the lactic acid bacteria.</title>
        <authorList>
            <person name="Makarova K.S."/>
            <person name="Slesarev A."/>
            <person name="Wolf Y.I."/>
            <person name="Sorokin A."/>
            <person name="Mirkin B."/>
            <person name="Koonin E.V."/>
            <person name="Pavlov A."/>
            <person name="Pavlova N."/>
            <person name="Karamychev V."/>
            <person name="Polouchine N."/>
            <person name="Shakhova V."/>
            <person name="Grigoriev I."/>
            <person name="Lou Y."/>
            <person name="Rohksar D."/>
            <person name="Lucas S."/>
            <person name="Huang K."/>
            <person name="Goodstein D.M."/>
            <person name="Hawkins T."/>
            <person name="Plengvidhya V."/>
            <person name="Welker D."/>
            <person name="Hughes J."/>
            <person name="Goh Y."/>
            <person name="Benson A."/>
            <person name="Baldwin K."/>
            <person name="Lee J.-H."/>
            <person name="Diaz-Muniz I."/>
            <person name="Dosti B."/>
            <person name="Smeianov V."/>
            <person name="Wechter W."/>
            <person name="Barabote R."/>
            <person name="Lorca G."/>
            <person name="Altermann E."/>
            <person name="Barrangou R."/>
            <person name="Ganesan B."/>
            <person name="Xie Y."/>
            <person name="Rawsthorne H."/>
            <person name="Tamir D."/>
            <person name="Parker C."/>
            <person name="Breidt F."/>
            <person name="Broadbent J.R."/>
            <person name="Hutkins R."/>
            <person name="O'Sullivan D."/>
            <person name="Steele J."/>
            <person name="Unlu G."/>
            <person name="Saier M.H. Jr."/>
            <person name="Klaenhammer T."/>
            <person name="Richardson P."/>
            <person name="Kozyavkin S."/>
            <person name="Weimer B.C."/>
            <person name="Mills D.A."/>
        </authorList>
    </citation>
    <scope>NUCLEOTIDE SEQUENCE [LARGE SCALE GENOMIC DNA]</scope>
    <source>
        <strain>ATCC 367 / BCRC 12310 / CIP 105137 / JCM 1170 / LMG 11437 / NCIMB 947 / NCTC 947</strain>
    </source>
</reference>
<comment type="function">
    <text evidence="1">Binds directly to 16S ribosomal RNA.</text>
</comment>
<comment type="similarity">
    <text evidence="1">Belongs to the bacterial ribosomal protein bS20 family.</text>
</comment>
<feature type="chain" id="PRO_1000126460" description="Small ribosomal subunit protein bS20">
    <location>
        <begin position="1"/>
        <end position="84"/>
    </location>
</feature>
<protein>
    <recommendedName>
        <fullName evidence="1">Small ribosomal subunit protein bS20</fullName>
    </recommendedName>
    <alternativeName>
        <fullName evidence="2">30S ribosomal protein S20</fullName>
    </alternativeName>
</protein>
<organism>
    <name type="scientific">Levilactobacillus brevis (strain ATCC 367 / BCRC 12310 / CIP 105137 / JCM 1170 / LMG 11437 / NCIMB 947 / NCTC 947)</name>
    <name type="common">Lactobacillus brevis</name>
    <dbReference type="NCBI Taxonomy" id="387344"/>
    <lineage>
        <taxon>Bacteria</taxon>
        <taxon>Bacillati</taxon>
        <taxon>Bacillota</taxon>
        <taxon>Bacilli</taxon>
        <taxon>Lactobacillales</taxon>
        <taxon>Lactobacillaceae</taxon>
        <taxon>Levilactobacillus</taxon>
    </lineage>
</organism>
<accession>Q03QN1</accession>
<gene>
    <name evidence="1" type="primary">rpsT</name>
    <name type="ordered locus">LVIS_1393</name>
</gene>
<evidence type="ECO:0000255" key="1">
    <source>
        <dbReference type="HAMAP-Rule" id="MF_00500"/>
    </source>
</evidence>
<evidence type="ECO:0000305" key="2"/>
<keyword id="KW-1185">Reference proteome</keyword>
<keyword id="KW-0687">Ribonucleoprotein</keyword>
<keyword id="KW-0689">Ribosomal protein</keyword>
<keyword id="KW-0694">RNA-binding</keyword>
<keyword id="KW-0699">rRNA-binding</keyword>
<sequence>MPIIKSAIERAKTNVKANERNSAQLSTMRTAVKRFEQAKTAGADNAEELYRKASAAVDKAASKGLIKRNKASRDKSRMAARLAK</sequence>
<dbReference type="EMBL" id="CP000416">
    <property type="protein sequence ID" value="ABJ64491.1"/>
    <property type="molecule type" value="Genomic_DNA"/>
</dbReference>
<dbReference type="RefSeq" id="WP_011668064.1">
    <property type="nucleotide sequence ID" value="NC_008497.1"/>
</dbReference>
<dbReference type="SMR" id="Q03QN1"/>
<dbReference type="STRING" id="387344.LVIS_1393"/>
<dbReference type="GeneID" id="56993163"/>
<dbReference type="KEGG" id="lbr:LVIS_1393"/>
<dbReference type="eggNOG" id="COG0268">
    <property type="taxonomic scope" value="Bacteria"/>
</dbReference>
<dbReference type="HOGENOM" id="CLU_160655_1_1_9"/>
<dbReference type="Proteomes" id="UP000001652">
    <property type="component" value="Chromosome"/>
</dbReference>
<dbReference type="GO" id="GO:0005829">
    <property type="term" value="C:cytosol"/>
    <property type="evidence" value="ECO:0007669"/>
    <property type="project" value="TreeGrafter"/>
</dbReference>
<dbReference type="GO" id="GO:0015935">
    <property type="term" value="C:small ribosomal subunit"/>
    <property type="evidence" value="ECO:0007669"/>
    <property type="project" value="TreeGrafter"/>
</dbReference>
<dbReference type="GO" id="GO:0070181">
    <property type="term" value="F:small ribosomal subunit rRNA binding"/>
    <property type="evidence" value="ECO:0007669"/>
    <property type="project" value="TreeGrafter"/>
</dbReference>
<dbReference type="GO" id="GO:0003735">
    <property type="term" value="F:structural constituent of ribosome"/>
    <property type="evidence" value="ECO:0007669"/>
    <property type="project" value="InterPro"/>
</dbReference>
<dbReference type="GO" id="GO:0006412">
    <property type="term" value="P:translation"/>
    <property type="evidence" value="ECO:0007669"/>
    <property type="project" value="UniProtKB-UniRule"/>
</dbReference>
<dbReference type="Gene3D" id="1.20.58.110">
    <property type="entry name" value="Ribosomal protein S20"/>
    <property type="match status" value="1"/>
</dbReference>
<dbReference type="HAMAP" id="MF_00500">
    <property type="entry name" value="Ribosomal_bS20"/>
    <property type="match status" value="1"/>
</dbReference>
<dbReference type="InterPro" id="IPR002583">
    <property type="entry name" value="Ribosomal_bS20"/>
</dbReference>
<dbReference type="InterPro" id="IPR036510">
    <property type="entry name" value="Ribosomal_bS20_sf"/>
</dbReference>
<dbReference type="NCBIfam" id="TIGR00029">
    <property type="entry name" value="S20"/>
    <property type="match status" value="1"/>
</dbReference>
<dbReference type="PANTHER" id="PTHR33398">
    <property type="entry name" value="30S RIBOSOMAL PROTEIN S20"/>
    <property type="match status" value="1"/>
</dbReference>
<dbReference type="PANTHER" id="PTHR33398:SF1">
    <property type="entry name" value="SMALL RIBOSOMAL SUBUNIT PROTEIN BS20C"/>
    <property type="match status" value="1"/>
</dbReference>
<dbReference type="Pfam" id="PF01649">
    <property type="entry name" value="Ribosomal_S20p"/>
    <property type="match status" value="1"/>
</dbReference>
<dbReference type="SUPFAM" id="SSF46992">
    <property type="entry name" value="Ribosomal protein S20"/>
    <property type="match status" value="1"/>
</dbReference>
<proteinExistence type="inferred from homology"/>
<name>RS20_LEVBA</name>